<proteinExistence type="inferred from homology"/>
<reference key="1">
    <citation type="journal article" date="1995" name="Science">
        <title>Whole-genome random sequencing and assembly of Haemophilus influenzae Rd.</title>
        <authorList>
            <person name="Fleischmann R.D."/>
            <person name="Adams M.D."/>
            <person name="White O."/>
            <person name="Clayton R.A."/>
            <person name="Kirkness E.F."/>
            <person name="Kerlavage A.R."/>
            <person name="Bult C.J."/>
            <person name="Tomb J.-F."/>
            <person name="Dougherty B.A."/>
            <person name="Merrick J.M."/>
            <person name="McKenney K."/>
            <person name="Sutton G.G."/>
            <person name="FitzHugh W."/>
            <person name="Fields C.A."/>
            <person name="Gocayne J.D."/>
            <person name="Scott J.D."/>
            <person name="Shirley R."/>
            <person name="Liu L.-I."/>
            <person name="Glodek A."/>
            <person name="Kelley J.M."/>
            <person name="Weidman J.F."/>
            <person name="Phillips C.A."/>
            <person name="Spriggs T."/>
            <person name="Hedblom E."/>
            <person name="Cotton M.D."/>
            <person name="Utterback T.R."/>
            <person name="Hanna M.C."/>
            <person name="Nguyen D.T."/>
            <person name="Saudek D.M."/>
            <person name="Brandon R.C."/>
            <person name="Fine L.D."/>
            <person name="Fritchman J.L."/>
            <person name="Fuhrmann J.L."/>
            <person name="Geoghagen N.S.M."/>
            <person name="Gnehm C.L."/>
            <person name="McDonald L.A."/>
            <person name="Small K.V."/>
            <person name="Fraser C.M."/>
            <person name="Smith H.O."/>
            <person name="Venter J.C."/>
        </authorList>
    </citation>
    <scope>NUCLEOTIDE SEQUENCE [LARGE SCALE GENOMIC DNA]</scope>
    <source>
        <strain>ATCC 51907 / DSM 11121 / KW20 / Rd</strain>
    </source>
</reference>
<protein>
    <recommendedName>
        <fullName>Transferrin-binding protein B</fullName>
        <shortName evidence="5">TbpB</shortName>
    </recommendedName>
    <alternativeName>
        <fullName evidence="4">Transferrin-binding protein 2</fullName>
    </alternativeName>
</protein>
<evidence type="ECO:0000250" key="1">
    <source>
        <dbReference type="UniProtKB" id="Q4QLR5"/>
    </source>
</evidence>
<evidence type="ECO:0000255" key="2">
    <source>
        <dbReference type="PROSITE-ProRule" id="PRU00303"/>
    </source>
</evidence>
<evidence type="ECO:0000256" key="3">
    <source>
        <dbReference type="SAM" id="MobiDB-lite"/>
    </source>
</evidence>
<evidence type="ECO:0000303" key="4">
    <source>
    </source>
</evidence>
<evidence type="ECO:0000305" key="5"/>
<feature type="signal peptide" evidence="2">
    <location>
        <begin position="1"/>
        <end position="17"/>
    </location>
</feature>
<feature type="chain" id="PRO_0000018191" description="Transferrin-binding protein B" evidence="2">
    <location>
        <begin position="18"/>
        <end position="625"/>
    </location>
</feature>
<feature type="region of interest" description="Disordered" evidence="3">
    <location>
        <begin position="25"/>
        <end position="52"/>
    </location>
</feature>
<feature type="region of interest" description="Disordered" evidence="3">
    <location>
        <begin position="99"/>
        <end position="125"/>
    </location>
</feature>
<feature type="region of interest" description="Disordered" evidence="3">
    <location>
        <begin position="275"/>
        <end position="298"/>
    </location>
</feature>
<feature type="region of interest" description="Disordered" evidence="3">
    <location>
        <begin position="584"/>
        <end position="610"/>
    </location>
</feature>
<feature type="compositionally biased region" description="Basic and acidic residues" evidence="3">
    <location>
        <begin position="276"/>
        <end position="292"/>
    </location>
</feature>
<feature type="compositionally biased region" description="Polar residues" evidence="3">
    <location>
        <begin position="587"/>
        <end position="605"/>
    </location>
</feature>
<feature type="lipid moiety-binding region" description="N-palmitoyl cysteine" evidence="2">
    <location>
        <position position="18"/>
    </location>
</feature>
<feature type="lipid moiety-binding region" description="S-diacylglycerol cysteine" evidence="2">
    <location>
        <position position="18"/>
    </location>
</feature>
<comment type="function">
    <text evidence="1">Haemophilus acquires iron by extracting it from serum transferrin (TF) in its human host. Acts as a transferrin receptor and is required for transferrin utilization.</text>
</comment>
<comment type="subcellular location">
    <subcellularLocation>
        <location evidence="1 2">Cell outer membrane</location>
        <topology evidence="2">Lipid-anchor</topology>
    </subcellularLocation>
    <subcellularLocation>
        <location evidence="1">Cell surface</location>
    </subcellularLocation>
</comment>
<comment type="similarity">
    <text evidence="5">Belongs to the TbpB family.</text>
</comment>
<organism>
    <name type="scientific">Haemophilus influenzae (strain ATCC 51907 / DSM 11121 / KW20 / Rd)</name>
    <dbReference type="NCBI Taxonomy" id="71421"/>
    <lineage>
        <taxon>Bacteria</taxon>
        <taxon>Pseudomonadati</taxon>
        <taxon>Pseudomonadota</taxon>
        <taxon>Gammaproteobacteria</taxon>
        <taxon>Pasteurellales</taxon>
        <taxon>Pasteurellaceae</taxon>
        <taxon>Haemophilus</taxon>
    </lineage>
</organism>
<name>TBPB_HAEIN</name>
<dbReference type="EMBL" id="L42023">
    <property type="protein sequence ID" value="AAC22657.1"/>
    <property type="molecule type" value="Genomic_DNA"/>
</dbReference>
<dbReference type="PIR" id="D64107">
    <property type="entry name" value="D64107"/>
</dbReference>
<dbReference type="RefSeq" id="NP_439158.1">
    <property type="nucleotide sequence ID" value="NC_000907.1"/>
</dbReference>
<dbReference type="SMR" id="P44971"/>
<dbReference type="STRING" id="71421.HI_0995"/>
<dbReference type="TCDB" id="1.B.14.2.12">
    <property type="family name" value="the outer membrane receptor (omr) family"/>
</dbReference>
<dbReference type="EnsemblBacteria" id="AAC22657">
    <property type="protein sequence ID" value="AAC22657"/>
    <property type="gene ID" value="HI_0995"/>
</dbReference>
<dbReference type="KEGG" id="hin:HI_0995"/>
<dbReference type="PATRIC" id="fig|71421.8.peg.1038"/>
<dbReference type="eggNOG" id="ENOG502Z93R">
    <property type="taxonomic scope" value="Bacteria"/>
</dbReference>
<dbReference type="HOGENOM" id="CLU_024250_0_0_6"/>
<dbReference type="OrthoDB" id="5673741at2"/>
<dbReference type="BioCyc" id="HINF71421:G1GJ1-1037-MONOMER"/>
<dbReference type="Proteomes" id="UP000000579">
    <property type="component" value="Chromosome"/>
</dbReference>
<dbReference type="GO" id="GO:0009279">
    <property type="term" value="C:cell outer membrane"/>
    <property type="evidence" value="ECO:0007669"/>
    <property type="project" value="UniProtKB-SubCell"/>
</dbReference>
<dbReference type="GO" id="GO:0009986">
    <property type="term" value="C:cell surface"/>
    <property type="evidence" value="ECO:0007669"/>
    <property type="project" value="UniProtKB-SubCell"/>
</dbReference>
<dbReference type="Gene3D" id="2.40.128.240">
    <property type="match status" value="1"/>
</dbReference>
<dbReference type="Gene3D" id="2.40.160.90">
    <property type="match status" value="2"/>
</dbReference>
<dbReference type="InterPro" id="IPR011250">
    <property type="entry name" value="OMP/PagP_b-brl"/>
</dbReference>
<dbReference type="InterPro" id="IPR001677">
    <property type="entry name" value="TbpB_B_D"/>
</dbReference>
<dbReference type="InterPro" id="IPR035316">
    <property type="entry name" value="TbpB_C-lobe"/>
</dbReference>
<dbReference type="InterPro" id="IPR038197">
    <property type="entry name" value="TbpB_C-lobe_sf"/>
</dbReference>
<dbReference type="InterPro" id="IPR035313">
    <property type="entry name" value="TbpB_N-lobe"/>
</dbReference>
<dbReference type="Pfam" id="PF17484">
    <property type="entry name" value="TbpB_A"/>
    <property type="match status" value="1"/>
</dbReference>
<dbReference type="Pfam" id="PF01298">
    <property type="entry name" value="TbpB_B_D"/>
    <property type="match status" value="2"/>
</dbReference>
<dbReference type="Pfam" id="PF17483">
    <property type="entry name" value="TbpB_C"/>
    <property type="match status" value="1"/>
</dbReference>
<dbReference type="SUPFAM" id="SSF56925">
    <property type="entry name" value="OMPA-like"/>
    <property type="match status" value="2"/>
</dbReference>
<dbReference type="PROSITE" id="PS51257">
    <property type="entry name" value="PROKAR_LIPOPROTEIN"/>
    <property type="match status" value="1"/>
</dbReference>
<sequence>MKSVPLISGGLSLFLSACSGGGGSFDVDDVSNPSSSKPRYQDDTSNQRKKSNLEKLSIPSLGGGMKLVAQNLRGREPSLLNEDGYIIFSSLSKIEDDFKKENQSQEPTIGSIDEPSETNSPQNHHGQQYVYSGLYYIQSWRNFSNGKFYSGYYGYAYYFGKQTATTLPVNGEATYKGTWSFITATERGKNYSLFSNSSGQGYSRRSAISEDIDLENDQNNGETGLISQFSADFGTKKLKGELFYTKRKTNNQNYEKKKLYDIDANIYSNRFRGKVKPTEKDSEEHPFTREGTLEGGFYGPNGEELGGKFLAGDKKVFGVFSAKETEETKQKTLPKETLIDGKLTTFSTKKPDATTSTTANAKTDATTNAENFTTKDISSFGEADYLLIDNYPVPLLPETENSGDFATSKHYEVRDKTYKVEACCKNLSYVKFGMYYEDNKKNNKNETEQYHQFLLGLRTASSKIPTTGNVKYRGSWFGYISDGETSYSTTGDKRQDKNAVAEFDVNFAEKTLKGSLKRADSQNPVFSIEANFKNGGNAFTGTATAKDLVIDGKNSQTKNTPINITTKVNGAFYGPNASELGGYFTYNGKNPTDKNSPTASSPSNSEKARAAVVFGAKKQVETNNK</sequence>
<gene>
    <name type="primary">tbpB</name>
    <name evidence="4" type="synonym">tbp2</name>
    <name type="ordered locus">HI_0995</name>
</gene>
<accession>P44971</accession>
<keyword id="KW-0998">Cell outer membrane</keyword>
<keyword id="KW-0449">Lipoprotein</keyword>
<keyword id="KW-0472">Membrane</keyword>
<keyword id="KW-0564">Palmitate</keyword>
<keyword id="KW-0675">Receptor</keyword>
<keyword id="KW-1185">Reference proteome</keyword>
<keyword id="KW-0732">Signal</keyword>
<keyword id="KW-0843">Virulence</keyword>